<comment type="function">
    <text evidence="1">DNA-binding protein that preferentially recognizes a curved DNA sequence. It is probably a functional analog of DnaJ; displays overlapping activities with DnaJ, but functions under different conditions, probably acting as a molecular chaperone in an adaptive response to environmental stresses other than heat shock. Lacks autonomous chaperone activity; binds native substrates and targets them for recognition by DnaK. Its activity is inhibited by the binding of CbpM.</text>
</comment>
<comment type="subcellular location">
    <subcellularLocation>
        <location evidence="1">Cytoplasm</location>
        <location evidence="1">Nucleoid</location>
    </subcellularLocation>
</comment>
<feature type="chain" id="PRO_1000137756" description="Curved DNA-binding protein">
    <location>
        <begin position="1"/>
        <end position="306"/>
    </location>
</feature>
<feature type="domain" description="J" evidence="1">
    <location>
        <begin position="5"/>
        <end position="69"/>
    </location>
</feature>
<reference key="1">
    <citation type="journal article" date="2011" name="J. Bacteriol.">
        <title>Comparative genomics of 28 Salmonella enterica isolates: evidence for CRISPR-mediated adaptive sublineage evolution.</title>
        <authorList>
            <person name="Fricke W.F."/>
            <person name="Mammel M.K."/>
            <person name="McDermott P.F."/>
            <person name="Tartera C."/>
            <person name="White D.G."/>
            <person name="Leclerc J.E."/>
            <person name="Ravel J."/>
            <person name="Cebula T.A."/>
        </authorList>
    </citation>
    <scope>NUCLEOTIDE SEQUENCE [LARGE SCALE GENOMIC DNA]</scope>
    <source>
        <strain>CT_02021853</strain>
    </source>
</reference>
<proteinExistence type="inferred from homology"/>
<protein>
    <recommendedName>
        <fullName evidence="1">Curved DNA-binding protein</fullName>
    </recommendedName>
</protein>
<gene>
    <name evidence="1" type="primary">cbpA</name>
    <name type="ordered locus">SeD_A1187</name>
</gene>
<keyword id="KW-0143">Chaperone</keyword>
<keyword id="KW-0963">Cytoplasm</keyword>
<keyword id="KW-0238">DNA-binding</keyword>
<dbReference type="EMBL" id="CP001144">
    <property type="protein sequence ID" value="ACH77804.1"/>
    <property type="molecule type" value="Genomic_DNA"/>
</dbReference>
<dbReference type="RefSeq" id="WP_000420603.1">
    <property type="nucleotide sequence ID" value="NC_011205.1"/>
</dbReference>
<dbReference type="SMR" id="B5FR40"/>
<dbReference type="KEGG" id="sed:SeD_A1187"/>
<dbReference type="HOGENOM" id="CLU_017633_0_0_6"/>
<dbReference type="Proteomes" id="UP000008322">
    <property type="component" value="Chromosome"/>
</dbReference>
<dbReference type="GO" id="GO:0005737">
    <property type="term" value="C:cytoplasm"/>
    <property type="evidence" value="ECO:0007669"/>
    <property type="project" value="UniProtKB-UniRule"/>
</dbReference>
<dbReference type="GO" id="GO:0009295">
    <property type="term" value="C:nucleoid"/>
    <property type="evidence" value="ECO:0007669"/>
    <property type="project" value="UniProtKB-SubCell"/>
</dbReference>
<dbReference type="GO" id="GO:0003681">
    <property type="term" value="F:bent DNA binding"/>
    <property type="evidence" value="ECO:0007669"/>
    <property type="project" value="UniProtKB-UniRule"/>
</dbReference>
<dbReference type="GO" id="GO:0051082">
    <property type="term" value="F:unfolded protein binding"/>
    <property type="evidence" value="ECO:0007669"/>
    <property type="project" value="InterPro"/>
</dbReference>
<dbReference type="GO" id="GO:0051085">
    <property type="term" value="P:chaperone cofactor-dependent protein refolding"/>
    <property type="evidence" value="ECO:0007669"/>
    <property type="project" value="TreeGrafter"/>
</dbReference>
<dbReference type="GO" id="GO:0042026">
    <property type="term" value="P:protein refolding"/>
    <property type="evidence" value="ECO:0007669"/>
    <property type="project" value="TreeGrafter"/>
</dbReference>
<dbReference type="CDD" id="cd06257">
    <property type="entry name" value="DnaJ"/>
    <property type="match status" value="1"/>
</dbReference>
<dbReference type="CDD" id="cd10747">
    <property type="entry name" value="DnaJ_C"/>
    <property type="match status" value="1"/>
</dbReference>
<dbReference type="FunFam" id="1.10.287.110:FF:000013">
    <property type="entry name" value="Curved DNA-binding protein"/>
    <property type="match status" value="1"/>
</dbReference>
<dbReference type="FunFam" id="2.60.260.20:FF:000008">
    <property type="entry name" value="Curved DNA-binding protein"/>
    <property type="match status" value="1"/>
</dbReference>
<dbReference type="Gene3D" id="1.10.287.110">
    <property type="entry name" value="DnaJ domain"/>
    <property type="match status" value="1"/>
</dbReference>
<dbReference type="Gene3D" id="1.20.5.460">
    <property type="entry name" value="Single helix bin"/>
    <property type="match status" value="1"/>
</dbReference>
<dbReference type="Gene3D" id="2.60.260.20">
    <property type="entry name" value="Urease metallochaperone UreE, N-terminal domain"/>
    <property type="match status" value="2"/>
</dbReference>
<dbReference type="HAMAP" id="MF_01154">
    <property type="entry name" value="CbpA"/>
    <property type="match status" value="1"/>
</dbReference>
<dbReference type="InterPro" id="IPR023859">
    <property type="entry name" value="DNA-bd_curved-DNA"/>
</dbReference>
<dbReference type="InterPro" id="IPR002939">
    <property type="entry name" value="DnaJ_C"/>
</dbReference>
<dbReference type="InterPro" id="IPR001623">
    <property type="entry name" value="DnaJ_domain"/>
</dbReference>
<dbReference type="InterPro" id="IPR018253">
    <property type="entry name" value="DnaJ_domain_CS"/>
</dbReference>
<dbReference type="InterPro" id="IPR008971">
    <property type="entry name" value="HSP40/DnaJ_pept-bd"/>
</dbReference>
<dbReference type="InterPro" id="IPR036869">
    <property type="entry name" value="J_dom_sf"/>
</dbReference>
<dbReference type="NCBIfam" id="NF007618">
    <property type="entry name" value="PRK10266.1"/>
    <property type="match status" value="1"/>
</dbReference>
<dbReference type="PANTHER" id="PTHR43096">
    <property type="entry name" value="DNAJ HOMOLOG 1, MITOCHONDRIAL-RELATED"/>
    <property type="match status" value="1"/>
</dbReference>
<dbReference type="PANTHER" id="PTHR43096:SF52">
    <property type="entry name" value="DNAJ HOMOLOG 1, MITOCHONDRIAL-RELATED"/>
    <property type="match status" value="1"/>
</dbReference>
<dbReference type="Pfam" id="PF00226">
    <property type="entry name" value="DnaJ"/>
    <property type="match status" value="1"/>
</dbReference>
<dbReference type="Pfam" id="PF01556">
    <property type="entry name" value="DnaJ_C"/>
    <property type="match status" value="1"/>
</dbReference>
<dbReference type="PRINTS" id="PR00625">
    <property type="entry name" value="JDOMAIN"/>
</dbReference>
<dbReference type="SMART" id="SM00271">
    <property type="entry name" value="DnaJ"/>
    <property type="match status" value="1"/>
</dbReference>
<dbReference type="SUPFAM" id="SSF46565">
    <property type="entry name" value="Chaperone J-domain"/>
    <property type="match status" value="1"/>
</dbReference>
<dbReference type="SUPFAM" id="SSF49493">
    <property type="entry name" value="HSP40/DnaJ peptide-binding domain"/>
    <property type="match status" value="2"/>
</dbReference>
<dbReference type="PROSITE" id="PS00636">
    <property type="entry name" value="DNAJ_1"/>
    <property type="match status" value="1"/>
</dbReference>
<dbReference type="PROSITE" id="PS50076">
    <property type="entry name" value="DNAJ_2"/>
    <property type="match status" value="1"/>
</dbReference>
<organism>
    <name type="scientific">Salmonella dublin (strain CT_02021853)</name>
    <dbReference type="NCBI Taxonomy" id="439851"/>
    <lineage>
        <taxon>Bacteria</taxon>
        <taxon>Pseudomonadati</taxon>
        <taxon>Pseudomonadota</taxon>
        <taxon>Gammaproteobacteria</taxon>
        <taxon>Enterobacterales</taxon>
        <taxon>Enterobacteriaceae</taxon>
        <taxon>Salmonella</taxon>
    </lineage>
</organism>
<name>CBPA_SALDC</name>
<evidence type="ECO:0000255" key="1">
    <source>
        <dbReference type="HAMAP-Rule" id="MF_01154"/>
    </source>
</evidence>
<sequence>MELKDYYAIMGVKPTDDLKTIKTAYRRLARKYHPDVSKEPDAEARFKEVAEAWEVLSDEQRRAEYDQLWQHRNDPQFNRQFQQHEGQPYNAEDFDDIFSSIFGQHGRHSHHRHAARGHDIEIEVAVFLEETLEEHQRTISYSVPVYNAFGLVEREIPKTLNVKIPAGVSNGQRIRLKGQGTPGENGGPNGDLWLVIHIAPHPLFDIVNQDLEVVLPLAPWEAALGAKVSVPTLKERILLTIPPGSQAGQRLRIKGKGLASKKHTGDLYAIIKIVMPPKPDEKTAALWQQLADAQSSFDPRQQWGKA</sequence>
<accession>B5FR40</accession>